<reference key="1">
    <citation type="submission" date="2008-08" db="EMBL/GenBank/DDBJ databases">
        <title>Complete sequence of Acidithiobacillus ferrooxidans ATCC 53993.</title>
        <authorList>
            <person name="Lucas S."/>
            <person name="Copeland A."/>
            <person name="Lapidus A."/>
            <person name="Glavina del Rio T."/>
            <person name="Dalin E."/>
            <person name="Tice H."/>
            <person name="Bruce D."/>
            <person name="Goodwin L."/>
            <person name="Pitluck S."/>
            <person name="Sims D."/>
            <person name="Brettin T."/>
            <person name="Detter J.C."/>
            <person name="Han C."/>
            <person name="Kuske C.R."/>
            <person name="Larimer F."/>
            <person name="Land M."/>
            <person name="Hauser L."/>
            <person name="Kyrpides N."/>
            <person name="Lykidis A."/>
            <person name="Borole A.P."/>
        </authorList>
    </citation>
    <scope>NUCLEOTIDE SEQUENCE [LARGE SCALE GENOMIC DNA]</scope>
    <source>
        <strain>ATCC 53993 / BNL-5-31</strain>
    </source>
</reference>
<organism>
    <name type="scientific">Acidithiobacillus ferrooxidans (strain ATCC 53993 / BNL-5-31)</name>
    <name type="common">Leptospirillum ferrooxidans (ATCC 53993)</name>
    <dbReference type="NCBI Taxonomy" id="380394"/>
    <lineage>
        <taxon>Bacteria</taxon>
        <taxon>Pseudomonadati</taxon>
        <taxon>Pseudomonadota</taxon>
        <taxon>Acidithiobacillia</taxon>
        <taxon>Acidithiobacillales</taxon>
        <taxon>Acidithiobacillaceae</taxon>
        <taxon>Acidithiobacillus</taxon>
    </lineage>
</organism>
<sequence length="500" mass="52844">MEIAVQCQNPTTDNSDCVVVGIYEGGILSPAATLVDLASGGALRALLDTGDFTGDCGDTQLLYQVPGMAAARVLVLGLGSHGKVKDSQFRKAALAAARALQGARVGRASLHLLDTPVIRRSAPACAKILVQAVADAEYHFDRHKKPADAPQRPISELQLSISENDTAALAELQGAVAEAQATARAVAWTRDMANEPGNICTPTWLAEQAEAMAGRLGIKSTILGPDAMEALGMHLLLGVAHGSRQPPRLIILEYRGGAENQAPIVLVGKGITFDAGGISLKPADKMDEMKYDMCGGASALAAIQAAAELQLPLNIVTVVPASENLPDGQATKPGDIHRSMNGLSVEVVNTDAEGRLILADTLTYVERFEPDVVIDMATLTGACIIALGHQTAAVMGNHEGLVHDLIAAGKESMDRVWELPLFEEYQEQLKSPVADLSNVGGRPAGTITAACFLSRFTENYRWAHLDIAGVAWKSGEHKGATGRPVPLLVEYLLRRARQVA</sequence>
<keyword id="KW-0031">Aminopeptidase</keyword>
<keyword id="KW-0963">Cytoplasm</keyword>
<keyword id="KW-0378">Hydrolase</keyword>
<keyword id="KW-0464">Manganese</keyword>
<keyword id="KW-0479">Metal-binding</keyword>
<keyword id="KW-0645">Protease</keyword>
<proteinExistence type="inferred from homology"/>
<name>AMPA_ACIF5</name>
<dbReference type="EC" id="3.4.11.1" evidence="1"/>
<dbReference type="EC" id="3.4.11.10" evidence="1"/>
<dbReference type="EMBL" id="CP001132">
    <property type="protein sequence ID" value="ACH84078.1"/>
    <property type="molecule type" value="Genomic_DNA"/>
</dbReference>
<dbReference type="RefSeq" id="WP_009567190.1">
    <property type="nucleotide sequence ID" value="NC_011206.1"/>
</dbReference>
<dbReference type="SMR" id="B5EKZ2"/>
<dbReference type="MEROPS" id="M17.003"/>
<dbReference type="KEGG" id="afe:Lferr_1857"/>
<dbReference type="eggNOG" id="COG0260">
    <property type="taxonomic scope" value="Bacteria"/>
</dbReference>
<dbReference type="HOGENOM" id="CLU_013734_2_2_6"/>
<dbReference type="GO" id="GO:0005737">
    <property type="term" value="C:cytoplasm"/>
    <property type="evidence" value="ECO:0007669"/>
    <property type="project" value="UniProtKB-SubCell"/>
</dbReference>
<dbReference type="GO" id="GO:0030145">
    <property type="term" value="F:manganese ion binding"/>
    <property type="evidence" value="ECO:0007669"/>
    <property type="project" value="UniProtKB-UniRule"/>
</dbReference>
<dbReference type="GO" id="GO:0070006">
    <property type="term" value="F:metalloaminopeptidase activity"/>
    <property type="evidence" value="ECO:0007669"/>
    <property type="project" value="InterPro"/>
</dbReference>
<dbReference type="GO" id="GO:0006508">
    <property type="term" value="P:proteolysis"/>
    <property type="evidence" value="ECO:0007669"/>
    <property type="project" value="UniProtKB-KW"/>
</dbReference>
<dbReference type="CDD" id="cd00433">
    <property type="entry name" value="Peptidase_M17"/>
    <property type="match status" value="1"/>
</dbReference>
<dbReference type="Gene3D" id="3.40.220.10">
    <property type="entry name" value="Leucine Aminopeptidase, subunit E, domain 1"/>
    <property type="match status" value="1"/>
</dbReference>
<dbReference type="Gene3D" id="3.40.630.10">
    <property type="entry name" value="Zn peptidases"/>
    <property type="match status" value="1"/>
</dbReference>
<dbReference type="HAMAP" id="MF_00181">
    <property type="entry name" value="Cytosol_peptidase_M17"/>
    <property type="match status" value="1"/>
</dbReference>
<dbReference type="InterPro" id="IPR011356">
    <property type="entry name" value="Leucine_aapep/pepB"/>
</dbReference>
<dbReference type="InterPro" id="IPR043472">
    <property type="entry name" value="Macro_dom-like"/>
</dbReference>
<dbReference type="InterPro" id="IPR000819">
    <property type="entry name" value="Peptidase_M17_C"/>
</dbReference>
<dbReference type="InterPro" id="IPR023042">
    <property type="entry name" value="Peptidase_M17_leu_NH2_pept"/>
</dbReference>
<dbReference type="InterPro" id="IPR008283">
    <property type="entry name" value="Peptidase_M17_N"/>
</dbReference>
<dbReference type="NCBIfam" id="NF002073">
    <property type="entry name" value="PRK00913.1-2"/>
    <property type="match status" value="1"/>
</dbReference>
<dbReference type="NCBIfam" id="NF002074">
    <property type="entry name" value="PRK00913.1-4"/>
    <property type="match status" value="1"/>
</dbReference>
<dbReference type="PANTHER" id="PTHR11963:SF23">
    <property type="entry name" value="CYTOSOL AMINOPEPTIDASE"/>
    <property type="match status" value="1"/>
</dbReference>
<dbReference type="PANTHER" id="PTHR11963">
    <property type="entry name" value="LEUCINE AMINOPEPTIDASE-RELATED"/>
    <property type="match status" value="1"/>
</dbReference>
<dbReference type="Pfam" id="PF00883">
    <property type="entry name" value="Peptidase_M17"/>
    <property type="match status" value="1"/>
</dbReference>
<dbReference type="Pfam" id="PF02789">
    <property type="entry name" value="Peptidase_M17_N"/>
    <property type="match status" value="1"/>
</dbReference>
<dbReference type="PRINTS" id="PR00481">
    <property type="entry name" value="LAMNOPPTDASE"/>
</dbReference>
<dbReference type="SUPFAM" id="SSF52949">
    <property type="entry name" value="Macro domain-like"/>
    <property type="match status" value="1"/>
</dbReference>
<dbReference type="SUPFAM" id="SSF53187">
    <property type="entry name" value="Zn-dependent exopeptidases"/>
    <property type="match status" value="1"/>
</dbReference>
<dbReference type="PROSITE" id="PS00631">
    <property type="entry name" value="CYTOSOL_AP"/>
    <property type="match status" value="1"/>
</dbReference>
<feature type="chain" id="PRO_1000098300" description="Probable cytosol aminopeptidase">
    <location>
        <begin position="1"/>
        <end position="500"/>
    </location>
</feature>
<feature type="active site" evidence="1">
    <location>
        <position position="281"/>
    </location>
</feature>
<feature type="active site" evidence="1">
    <location>
        <position position="355"/>
    </location>
</feature>
<feature type="binding site" evidence="1">
    <location>
        <position position="269"/>
    </location>
    <ligand>
        <name>Mn(2+)</name>
        <dbReference type="ChEBI" id="CHEBI:29035"/>
        <label>2</label>
    </ligand>
</feature>
<feature type="binding site" evidence="1">
    <location>
        <position position="274"/>
    </location>
    <ligand>
        <name>Mn(2+)</name>
        <dbReference type="ChEBI" id="CHEBI:29035"/>
        <label>1</label>
    </ligand>
</feature>
<feature type="binding site" evidence="1">
    <location>
        <position position="274"/>
    </location>
    <ligand>
        <name>Mn(2+)</name>
        <dbReference type="ChEBI" id="CHEBI:29035"/>
        <label>2</label>
    </ligand>
</feature>
<feature type="binding site" evidence="1">
    <location>
        <position position="292"/>
    </location>
    <ligand>
        <name>Mn(2+)</name>
        <dbReference type="ChEBI" id="CHEBI:29035"/>
        <label>2</label>
    </ligand>
</feature>
<feature type="binding site" evidence="1">
    <location>
        <position position="351"/>
    </location>
    <ligand>
        <name>Mn(2+)</name>
        <dbReference type="ChEBI" id="CHEBI:29035"/>
        <label>1</label>
    </ligand>
</feature>
<feature type="binding site" evidence="1">
    <location>
        <position position="353"/>
    </location>
    <ligand>
        <name>Mn(2+)</name>
        <dbReference type="ChEBI" id="CHEBI:29035"/>
        <label>1</label>
    </ligand>
</feature>
<feature type="binding site" evidence="1">
    <location>
        <position position="353"/>
    </location>
    <ligand>
        <name>Mn(2+)</name>
        <dbReference type="ChEBI" id="CHEBI:29035"/>
        <label>2</label>
    </ligand>
</feature>
<comment type="function">
    <text evidence="1">Presumably involved in the processing and regular turnover of intracellular proteins. Catalyzes the removal of unsubstituted N-terminal amino acids from various peptides.</text>
</comment>
<comment type="catalytic activity">
    <reaction evidence="1">
        <text>Release of an N-terminal amino acid, Xaa-|-Yaa-, in which Xaa is preferably Leu, but may be other amino acids including Pro although not Arg or Lys, and Yaa may be Pro. Amino acid amides and methyl esters are also readily hydrolyzed, but rates on arylamides are exceedingly low.</text>
        <dbReference type="EC" id="3.4.11.1"/>
    </reaction>
</comment>
<comment type="catalytic activity">
    <reaction evidence="1">
        <text>Release of an N-terminal amino acid, preferentially leucine, but not glutamic or aspartic acids.</text>
        <dbReference type="EC" id="3.4.11.10"/>
    </reaction>
</comment>
<comment type="cofactor">
    <cofactor evidence="1">
        <name>Mn(2+)</name>
        <dbReference type="ChEBI" id="CHEBI:29035"/>
    </cofactor>
    <text evidence="1">Binds 2 manganese ions per subunit.</text>
</comment>
<comment type="subcellular location">
    <subcellularLocation>
        <location evidence="1">Cytoplasm</location>
    </subcellularLocation>
</comment>
<comment type="similarity">
    <text evidence="1">Belongs to the peptidase M17 family.</text>
</comment>
<gene>
    <name evidence="1" type="primary">pepA</name>
    <name type="ordered locus">Lferr_1857</name>
</gene>
<protein>
    <recommendedName>
        <fullName evidence="1">Probable cytosol aminopeptidase</fullName>
        <ecNumber evidence="1">3.4.11.1</ecNumber>
    </recommendedName>
    <alternativeName>
        <fullName evidence="1">Leucine aminopeptidase</fullName>
        <shortName evidence="1">LAP</shortName>
        <ecNumber evidence="1">3.4.11.10</ecNumber>
    </alternativeName>
    <alternativeName>
        <fullName evidence="1">Leucyl aminopeptidase</fullName>
    </alternativeName>
</protein>
<evidence type="ECO:0000255" key="1">
    <source>
        <dbReference type="HAMAP-Rule" id="MF_00181"/>
    </source>
</evidence>
<accession>B5EKZ2</accession>